<proteinExistence type="evidence at transcript level"/>
<protein>
    <recommendedName>
        <fullName evidence="7">Protein arginine N-methyltransferase 1</fullName>
        <ecNumber evidence="3">2.1.1.319</ecNumber>
    </recommendedName>
    <alternativeName>
        <fullName evidence="8">Heterogeneous nuclear ribonucleoprotein methyltransferase-like protein 2</fullName>
    </alternativeName>
    <alternativeName>
        <fullName>Histone-arginine N-methyltransferase PRMT1</fullName>
    </alternativeName>
</protein>
<evidence type="ECO:0000250" key="1">
    <source>
        <dbReference type="UniProtKB" id="Q63009"/>
    </source>
</evidence>
<evidence type="ECO:0000250" key="2">
    <source>
        <dbReference type="UniProtKB" id="Q8AV13"/>
    </source>
</evidence>
<evidence type="ECO:0000250" key="3">
    <source>
        <dbReference type="UniProtKB" id="Q99873"/>
    </source>
</evidence>
<evidence type="ECO:0000250" key="4">
    <source>
        <dbReference type="UniProtKB" id="Q9JIF0"/>
    </source>
</evidence>
<evidence type="ECO:0000255" key="5">
    <source>
        <dbReference type="PROSITE-ProRule" id="PRU01015"/>
    </source>
</evidence>
<evidence type="ECO:0000305" key="6"/>
<evidence type="ECO:0000312" key="7">
    <source>
        <dbReference type="EMBL" id="AAH74614.1"/>
    </source>
</evidence>
<evidence type="ECO:0000312" key="8">
    <source>
        <dbReference type="EMBL" id="CAJ83544.1"/>
    </source>
</evidence>
<keyword id="KW-0010">Activator</keyword>
<keyword id="KW-0963">Cytoplasm</keyword>
<keyword id="KW-0217">Developmental protein</keyword>
<keyword id="KW-0221">Differentiation</keyword>
<keyword id="KW-0489">Methyltransferase</keyword>
<keyword id="KW-0524">Neurogenesis</keyword>
<keyword id="KW-0539">Nucleus</keyword>
<keyword id="KW-1185">Reference proteome</keyword>
<keyword id="KW-0949">S-adenosyl-L-methionine</keyword>
<keyword id="KW-0804">Transcription</keyword>
<keyword id="KW-0805">Transcription regulation</keyword>
<keyword id="KW-0808">Transferase</keyword>
<name>ANM1_XENTR</name>
<accession>Q28F07</accession>
<accession>Q6GL90</accession>
<dbReference type="EC" id="2.1.1.319" evidence="3"/>
<dbReference type="EMBL" id="CR762238">
    <property type="protein sequence ID" value="CAJ83544.1"/>
    <property type="molecule type" value="mRNA"/>
</dbReference>
<dbReference type="EMBL" id="BC074614">
    <property type="protein sequence ID" value="AAH74614.1"/>
    <property type="status" value="ALT_INIT"/>
    <property type="molecule type" value="mRNA"/>
</dbReference>
<dbReference type="RefSeq" id="NP_001005629.2">
    <property type="nucleotide sequence ID" value="NM_001005629.2"/>
</dbReference>
<dbReference type="SMR" id="Q28F07"/>
<dbReference type="FunCoup" id="Q28F07">
    <property type="interactions" value="3394"/>
</dbReference>
<dbReference type="STRING" id="8364.ENSXETP00000034399"/>
<dbReference type="PaxDb" id="8364-ENSXETP00000036328"/>
<dbReference type="DNASU" id="448086"/>
<dbReference type="GeneID" id="448086"/>
<dbReference type="KEGG" id="xtr:448086"/>
<dbReference type="AGR" id="Xenbase:XB-GENE-484022"/>
<dbReference type="CTD" id="3276"/>
<dbReference type="Xenbase" id="XB-GENE-484022">
    <property type="gene designation" value="prmt1"/>
</dbReference>
<dbReference type="eggNOG" id="KOG1499">
    <property type="taxonomic scope" value="Eukaryota"/>
</dbReference>
<dbReference type="InParanoid" id="Q28F07"/>
<dbReference type="OrthoDB" id="7848332at2759"/>
<dbReference type="Reactome" id="R-XTR-3214858">
    <property type="pathway name" value="RMTs methylate histone arginines"/>
</dbReference>
<dbReference type="Reactome" id="R-XTR-9009391">
    <property type="pathway name" value="Extra-nuclear estrogen signaling"/>
</dbReference>
<dbReference type="Reactome" id="R-XTR-9018519">
    <property type="pathway name" value="Estrogen-dependent gene expression"/>
</dbReference>
<dbReference type="Proteomes" id="UP000008143">
    <property type="component" value="Chromosome 7"/>
</dbReference>
<dbReference type="Bgee" id="ENSXETG00000002877">
    <property type="expression patterns" value="Expressed in egg cell and 21 other cell types or tissues"/>
</dbReference>
<dbReference type="ExpressionAtlas" id="Q28F07">
    <property type="expression patterns" value="differential"/>
</dbReference>
<dbReference type="GO" id="GO:0005737">
    <property type="term" value="C:cytoplasm"/>
    <property type="evidence" value="ECO:0000250"/>
    <property type="project" value="UniProtKB"/>
</dbReference>
<dbReference type="GO" id="GO:0005829">
    <property type="term" value="C:cytosol"/>
    <property type="evidence" value="ECO:0007669"/>
    <property type="project" value="UniProtKB-SubCell"/>
</dbReference>
<dbReference type="GO" id="GO:0005654">
    <property type="term" value="C:nucleoplasm"/>
    <property type="evidence" value="ECO:0007669"/>
    <property type="project" value="UniProtKB-SubCell"/>
</dbReference>
<dbReference type="GO" id="GO:0005634">
    <property type="term" value="C:nucleus"/>
    <property type="evidence" value="ECO:0000250"/>
    <property type="project" value="UniProtKB"/>
</dbReference>
<dbReference type="GO" id="GO:0106080">
    <property type="term" value="F:GATOR1 complex binding"/>
    <property type="evidence" value="ECO:0000250"/>
    <property type="project" value="UniProtKB"/>
</dbReference>
<dbReference type="GO" id="GO:0044020">
    <property type="term" value="F:histone H4R3 methyltransferase activity"/>
    <property type="evidence" value="ECO:0000250"/>
    <property type="project" value="UniProtKB"/>
</dbReference>
<dbReference type="GO" id="GO:0042054">
    <property type="term" value="F:histone methyltransferase activity"/>
    <property type="evidence" value="ECO:0000250"/>
    <property type="project" value="UniProtKB"/>
</dbReference>
<dbReference type="GO" id="GO:0042802">
    <property type="term" value="F:identical protein binding"/>
    <property type="evidence" value="ECO:0000250"/>
    <property type="project" value="UniProtKB"/>
</dbReference>
<dbReference type="GO" id="GO:0008170">
    <property type="term" value="F:N-methyltransferase activity"/>
    <property type="evidence" value="ECO:0000250"/>
    <property type="project" value="UniProtKB"/>
</dbReference>
<dbReference type="GO" id="GO:0008276">
    <property type="term" value="F:protein methyltransferase activity"/>
    <property type="evidence" value="ECO:0000250"/>
    <property type="project" value="UniProtKB"/>
</dbReference>
<dbReference type="GO" id="GO:0016274">
    <property type="term" value="F:protein-arginine N-methyltransferase activity"/>
    <property type="evidence" value="ECO:0000250"/>
    <property type="project" value="UniProtKB"/>
</dbReference>
<dbReference type="GO" id="GO:0035242">
    <property type="term" value="F:protein-arginine omega-N asymmetric methyltransferase activity"/>
    <property type="evidence" value="ECO:0000250"/>
    <property type="project" value="UniProtKB"/>
</dbReference>
<dbReference type="GO" id="GO:0035241">
    <property type="term" value="F:protein-arginine omega-N monomethyltransferase activity"/>
    <property type="evidence" value="ECO:0000250"/>
    <property type="project" value="UniProtKB"/>
</dbReference>
<dbReference type="GO" id="GO:1904047">
    <property type="term" value="F:S-adenosyl-L-methionine binding"/>
    <property type="evidence" value="ECO:0000250"/>
    <property type="project" value="UniProtKB"/>
</dbReference>
<dbReference type="GO" id="GO:0003713">
    <property type="term" value="F:transcription coactivator activity"/>
    <property type="evidence" value="ECO:0000250"/>
    <property type="project" value="UniProtKB"/>
</dbReference>
<dbReference type="GO" id="GO:0048738">
    <property type="term" value="P:cardiac muscle tissue development"/>
    <property type="evidence" value="ECO:0000250"/>
    <property type="project" value="UniProtKB"/>
</dbReference>
<dbReference type="GO" id="GO:0061431">
    <property type="term" value="P:cellular response to methionine"/>
    <property type="evidence" value="ECO:0000250"/>
    <property type="project" value="UniProtKB"/>
</dbReference>
<dbReference type="GO" id="GO:0007552">
    <property type="term" value="P:metamorphosis"/>
    <property type="evidence" value="ECO:0000250"/>
    <property type="project" value="UniProtKB"/>
</dbReference>
<dbReference type="GO" id="GO:0045653">
    <property type="term" value="P:negative regulation of megakaryocyte differentiation"/>
    <property type="evidence" value="ECO:0000250"/>
    <property type="project" value="UniProtKB"/>
</dbReference>
<dbReference type="GO" id="GO:0022008">
    <property type="term" value="P:neurogenesis"/>
    <property type="evidence" value="ECO:0000250"/>
    <property type="project" value="UniProtKB"/>
</dbReference>
<dbReference type="GO" id="GO:0018216">
    <property type="term" value="P:peptidyl-arginine methylation"/>
    <property type="evidence" value="ECO:0000250"/>
    <property type="project" value="UniProtKB"/>
</dbReference>
<dbReference type="GO" id="GO:0008284">
    <property type="term" value="P:positive regulation of cell population proliferation"/>
    <property type="evidence" value="ECO:0000250"/>
    <property type="project" value="UniProtKB"/>
</dbReference>
<dbReference type="GO" id="GO:0045893">
    <property type="term" value="P:positive regulation of DNA-templated transcription"/>
    <property type="evidence" value="ECO:0000250"/>
    <property type="project" value="UniProtKB"/>
</dbReference>
<dbReference type="GO" id="GO:1905168">
    <property type="term" value="P:positive regulation of double-strand break repair via homologous recombination"/>
    <property type="evidence" value="ECO:0000250"/>
    <property type="project" value="UniProtKB"/>
</dbReference>
<dbReference type="GO" id="GO:1904263">
    <property type="term" value="P:positive regulation of TORC1 signaling"/>
    <property type="evidence" value="ECO:0000250"/>
    <property type="project" value="UniProtKB"/>
</dbReference>
<dbReference type="GO" id="GO:0051260">
    <property type="term" value="P:protein homooligomerization"/>
    <property type="evidence" value="ECO:0000250"/>
    <property type="project" value="UniProtKB"/>
</dbReference>
<dbReference type="GO" id="GO:0006479">
    <property type="term" value="P:protein methylation"/>
    <property type="evidence" value="ECO:0000250"/>
    <property type="project" value="UniProtKB"/>
</dbReference>
<dbReference type="GO" id="GO:0045652">
    <property type="term" value="P:regulation of megakaryocyte differentiation"/>
    <property type="evidence" value="ECO:0000250"/>
    <property type="project" value="UniProtKB"/>
</dbReference>
<dbReference type="GO" id="GO:0008380">
    <property type="term" value="P:RNA splicing"/>
    <property type="evidence" value="ECO:0000250"/>
    <property type="project" value="UniProtKB"/>
</dbReference>
<dbReference type="CDD" id="cd02440">
    <property type="entry name" value="AdoMet_MTases"/>
    <property type="match status" value="1"/>
</dbReference>
<dbReference type="FunFam" id="2.70.160.11:FF:000001">
    <property type="entry name" value="Blast:Protein arginine N-methyltransferase 1"/>
    <property type="match status" value="1"/>
</dbReference>
<dbReference type="FunFam" id="3.40.50.150:FF:000003">
    <property type="entry name" value="Blast:Protein arginine N-methyltransferase 1"/>
    <property type="match status" value="1"/>
</dbReference>
<dbReference type="Gene3D" id="2.70.160.11">
    <property type="entry name" value="Hnrnp arginine n-methyltransferase1"/>
    <property type="match status" value="1"/>
</dbReference>
<dbReference type="Gene3D" id="3.40.50.150">
    <property type="entry name" value="Vaccinia Virus protein VP39"/>
    <property type="match status" value="1"/>
</dbReference>
<dbReference type="InterPro" id="IPR025799">
    <property type="entry name" value="Arg_MeTrfase"/>
</dbReference>
<dbReference type="InterPro" id="IPR041698">
    <property type="entry name" value="Methyltransf_25"/>
</dbReference>
<dbReference type="InterPro" id="IPR055135">
    <property type="entry name" value="PRMT_dom"/>
</dbReference>
<dbReference type="InterPro" id="IPR029063">
    <property type="entry name" value="SAM-dependent_MTases_sf"/>
</dbReference>
<dbReference type="PANTHER" id="PTHR11006">
    <property type="entry name" value="PROTEIN ARGININE N-METHYLTRANSFERASE"/>
    <property type="match status" value="1"/>
</dbReference>
<dbReference type="PANTHER" id="PTHR11006:SF54">
    <property type="entry name" value="PROTEIN ARGININE N-METHYLTRANSFERASE 1"/>
    <property type="match status" value="1"/>
</dbReference>
<dbReference type="Pfam" id="PF13649">
    <property type="entry name" value="Methyltransf_25"/>
    <property type="match status" value="1"/>
</dbReference>
<dbReference type="Pfam" id="PF22528">
    <property type="entry name" value="PRMT_C"/>
    <property type="match status" value="1"/>
</dbReference>
<dbReference type="SUPFAM" id="SSF53335">
    <property type="entry name" value="S-adenosyl-L-methionine-dependent methyltransferases"/>
    <property type="match status" value="1"/>
</dbReference>
<dbReference type="PROSITE" id="PS51678">
    <property type="entry name" value="SAM_MT_PRMT"/>
    <property type="match status" value="1"/>
</dbReference>
<organism>
    <name type="scientific">Xenopus tropicalis</name>
    <name type="common">Western clawed frog</name>
    <name type="synonym">Silurana tropicalis</name>
    <dbReference type="NCBI Taxonomy" id="8364"/>
    <lineage>
        <taxon>Eukaryota</taxon>
        <taxon>Metazoa</taxon>
        <taxon>Chordata</taxon>
        <taxon>Craniata</taxon>
        <taxon>Vertebrata</taxon>
        <taxon>Euteleostomi</taxon>
        <taxon>Amphibia</taxon>
        <taxon>Batrachia</taxon>
        <taxon>Anura</taxon>
        <taxon>Pipoidea</taxon>
        <taxon>Pipidae</taxon>
        <taxon>Xenopodinae</taxon>
        <taxon>Xenopus</taxon>
        <taxon>Silurana</taxon>
    </lineage>
</organism>
<feature type="chain" id="PRO_0000391367" description="Protein arginine N-methyltransferase 1">
    <location>
        <begin position="1"/>
        <end position="351"/>
    </location>
</feature>
<feature type="domain" description="SAM-dependent MTase PRMT-type" evidence="5">
    <location>
        <begin position="30"/>
        <end position="331"/>
    </location>
</feature>
<feature type="active site" evidence="1">
    <location>
        <position position="142"/>
    </location>
</feature>
<feature type="active site" evidence="1">
    <location>
        <position position="151"/>
    </location>
</feature>
<feature type="binding site" evidence="1">
    <location>
        <position position="43"/>
    </location>
    <ligand>
        <name>S-adenosyl-L-methionine</name>
        <dbReference type="ChEBI" id="CHEBI:59789"/>
    </ligand>
</feature>
<feature type="binding site" evidence="1">
    <location>
        <position position="52"/>
    </location>
    <ligand>
        <name>S-adenosyl-L-methionine</name>
        <dbReference type="ChEBI" id="CHEBI:59789"/>
    </ligand>
</feature>
<feature type="binding site" evidence="1">
    <location>
        <position position="76"/>
    </location>
    <ligand>
        <name>S-adenosyl-L-methionine</name>
        <dbReference type="ChEBI" id="CHEBI:59789"/>
    </ligand>
</feature>
<feature type="binding site" evidence="1">
    <location>
        <position position="98"/>
    </location>
    <ligand>
        <name>S-adenosyl-L-methionine</name>
        <dbReference type="ChEBI" id="CHEBI:59789"/>
    </ligand>
</feature>
<feature type="binding site" evidence="1">
    <location>
        <position position="127"/>
    </location>
    <ligand>
        <name>S-adenosyl-L-methionine</name>
        <dbReference type="ChEBI" id="CHEBI:59789"/>
    </ligand>
</feature>
<reference key="1">
    <citation type="submission" date="2006-10" db="EMBL/GenBank/DDBJ databases">
        <authorList>
            <consortium name="Sanger Xenopus tropicalis EST/cDNA project"/>
        </authorList>
    </citation>
    <scope>NUCLEOTIDE SEQUENCE [LARGE SCALE MRNA]</scope>
    <source>
        <tissue evidence="8">Gastrula</tissue>
    </source>
</reference>
<reference key="2">
    <citation type="submission" date="2004-06" db="EMBL/GenBank/DDBJ databases">
        <authorList>
            <consortium name="NIH - Xenopus Gene Collection (XGC) project"/>
        </authorList>
    </citation>
    <scope>NUCLEOTIDE SEQUENCE [LARGE SCALE MRNA]</scope>
    <source>
        <tissue evidence="7">Tail bud</tissue>
    </source>
</reference>
<gene>
    <name evidence="7" type="primary">prmt1</name>
    <name evidence="8" type="synonym">hrmt1l2</name>
    <name type="ORF">TGas059i20.1</name>
</gene>
<comment type="function">
    <text evidence="3">Arginine methyltransferase that methylates (mono and asymmetric dimethylation) the guanidino nitrogens of arginyl residues present in target proteins. Constitutes the main enzyme that mediates monomethylation and asymmetric dimethylation of histone H4 'Arg-3' (H4R3me1 and H4R3me2a, respectively), a specific tag for epigenetic transcriptional activation. Methylates ilf3 to regulate its DNA-binding activity. Required for neural induction, playing a key role in the control of epidermal versus neural cell fate choice (By similarity). Methylates cirbp to regulate its subcellular location. Acts transiently during metamorphosis as a transcription coactivator, enhancing thyroid hormone (T3) receptor (TR)-mediated transcription by enhancing TR binding to the T3 response element (TRE), and histone modification through recruitment of other coactivators.</text>
</comment>
<comment type="catalytic activity">
    <reaction evidence="3">
        <text>L-arginyl-[protein] + 2 S-adenosyl-L-methionine = N(omega),N(omega)-dimethyl-L-arginyl-[protein] + 2 S-adenosyl-L-homocysteine + 2 H(+)</text>
        <dbReference type="Rhea" id="RHEA:48096"/>
        <dbReference type="Rhea" id="RHEA-COMP:10532"/>
        <dbReference type="Rhea" id="RHEA-COMP:11991"/>
        <dbReference type="ChEBI" id="CHEBI:15378"/>
        <dbReference type="ChEBI" id="CHEBI:29965"/>
        <dbReference type="ChEBI" id="CHEBI:57856"/>
        <dbReference type="ChEBI" id="CHEBI:59789"/>
        <dbReference type="ChEBI" id="CHEBI:61897"/>
        <dbReference type="EC" id="2.1.1.319"/>
    </reaction>
    <physiologicalReaction direction="left-to-right" evidence="3">
        <dbReference type="Rhea" id="RHEA:48097"/>
    </physiologicalReaction>
</comment>
<comment type="catalytic activity">
    <reaction evidence="3">
        <text>L-arginyl-[protein] + S-adenosyl-L-methionine = N(omega)-methyl-L-arginyl-[protein] + S-adenosyl-L-homocysteine + H(+)</text>
        <dbReference type="Rhea" id="RHEA:48100"/>
        <dbReference type="Rhea" id="RHEA-COMP:10532"/>
        <dbReference type="Rhea" id="RHEA-COMP:11990"/>
        <dbReference type="ChEBI" id="CHEBI:15378"/>
        <dbReference type="ChEBI" id="CHEBI:29965"/>
        <dbReference type="ChEBI" id="CHEBI:57856"/>
        <dbReference type="ChEBI" id="CHEBI:59789"/>
        <dbReference type="ChEBI" id="CHEBI:65280"/>
    </reaction>
    <physiologicalReaction direction="left-to-right" evidence="3">
        <dbReference type="Rhea" id="RHEA:48101"/>
    </physiologicalReaction>
</comment>
<comment type="catalytic activity">
    <reaction evidence="3">
        <text>N(omega)-methyl-L-arginyl-[protein] + S-adenosyl-L-methionine = N(omega),N(omega)-dimethyl-L-arginyl-[protein] + S-adenosyl-L-homocysteine + H(+)</text>
        <dbReference type="Rhea" id="RHEA:48104"/>
        <dbReference type="Rhea" id="RHEA-COMP:11990"/>
        <dbReference type="Rhea" id="RHEA-COMP:11991"/>
        <dbReference type="ChEBI" id="CHEBI:15378"/>
        <dbReference type="ChEBI" id="CHEBI:57856"/>
        <dbReference type="ChEBI" id="CHEBI:59789"/>
        <dbReference type="ChEBI" id="CHEBI:61897"/>
        <dbReference type="ChEBI" id="CHEBI:65280"/>
    </reaction>
    <physiologicalReaction direction="left-to-right" evidence="3">
        <dbReference type="Rhea" id="RHEA:48105"/>
    </physiologicalReaction>
</comment>
<comment type="subunit">
    <text evidence="2 3">Homodimer. Homooctamer; individual homodimers associates to form a homooctamer and homooligomerization is required for proper localization to the cell membrane. Individual homodimers can associate to form a homohexamer (By similarity). Component of a complex with lsm14a/rap55a. Interacts with cirbp (By similarity).</text>
</comment>
<comment type="subcellular location">
    <subcellularLocation>
        <location evidence="4">Nucleus</location>
    </subcellularLocation>
    <subcellularLocation>
        <location evidence="4">Nucleus</location>
        <location evidence="4">Nucleoplasm</location>
    </subcellularLocation>
    <subcellularLocation>
        <location evidence="4">Cytoplasm</location>
        <location evidence="4">Cytosol</location>
    </subcellularLocation>
    <subcellularLocation>
        <location evidence="3">Cytoplasm</location>
    </subcellularLocation>
</comment>
<comment type="similarity">
    <text evidence="5">Belongs to the class I-like SAM-binding methyltransferase superfamily. Protein arginine N-methyltransferase family.</text>
</comment>
<comment type="sequence caution" evidence="6">
    <conflict type="erroneous initiation">
        <sequence resource="EMBL-CDS" id="AAH74614"/>
    </conflict>
    <text>Truncated N-terminus.</text>
</comment>
<sequence>MAEASTCNMEVSCTQPESSVKPNAEDMTSKDYYFDSYAHFGIHEEMLKDEVRTLTYRNSMFHNRHLFKDKVVLDVGSGTGILCMFAAKAGAKKVIGIECSSISDYAIKIVKANKLDHVVTIIKGKVEEVELPVEKVDIIISEWMGYCLFYESMLNTVIYARDKWLTPDGLIFPDRATLYVTAIEDRQYKDYKIHWWENVYGFDMSCIKDVAIKEPLVDVVDPKQLVTNACLIKEVDIYTVKVDDLTFTSPFCLQVKRNDYIHALVAYFNIEFTRCHKRTGFSTSPESPYTHWKQTVFYMEDYLTVKTGEEIFGTISMKPNAKNNRDLDFTVDIDFKGQLCELSCSTDYRMR</sequence>